<protein>
    <recommendedName>
        <fullName evidence="1">Small ribosomal subunit protein bS18</fullName>
    </recommendedName>
    <alternativeName>
        <fullName evidence="2">30S ribosomal protein S18</fullName>
    </alternativeName>
</protein>
<comment type="function">
    <text evidence="1">Binds as a heterodimer with protein bS6 to the central domain of the 16S rRNA, where it helps stabilize the platform of the 30S subunit.</text>
</comment>
<comment type="subunit">
    <text evidence="1">Part of the 30S ribosomal subunit. Forms a tight heterodimer with protein bS6.</text>
</comment>
<comment type="similarity">
    <text evidence="1">Belongs to the bacterial ribosomal protein bS18 family.</text>
</comment>
<accession>A2BR66</accession>
<evidence type="ECO:0000255" key="1">
    <source>
        <dbReference type="HAMAP-Rule" id="MF_00270"/>
    </source>
</evidence>
<evidence type="ECO:0000305" key="2"/>
<keyword id="KW-0687">Ribonucleoprotein</keyword>
<keyword id="KW-0689">Ribosomal protein</keyword>
<keyword id="KW-0694">RNA-binding</keyword>
<keyword id="KW-0699">rRNA-binding</keyword>
<reference key="1">
    <citation type="journal article" date="2007" name="PLoS Genet.">
        <title>Patterns and implications of gene gain and loss in the evolution of Prochlorococcus.</title>
        <authorList>
            <person name="Kettler G.C."/>
            <person name="Martiny A.C."/>
            <person name="Huang K."/>
            <person name="Zucker J."/>
            <person name="Coleman M.L."/>
            <person name="Rodrigue S."/>
            <person name="Chen F."/>
            <person name="Lapidus A."/>
            <person name="Ferriera S."/>
            <person name="Johnson J."/>
            <person name="Steglich C."/>
            <person name="Church G.M."/>
            <person name="Richardson P."/>
            <person name="Chisholm S.W."/>
        </authorList>
    </citation>
    <scope>NUCLEOTIDE SEQUENCE [LARGE SCALE GENOMIC DNA]</scope>
    <source>
        <strain>AS9601</strain>
    </source>
</reference>
<proteinExistence type="inferred from homology"/>
<organism>
    <name type="scientific">Prochlorococcus marinus (strain AS9601)</name>
    <dbReference type="NCBI Taxonomy" id="146891"/>
    <lineage>
        <taxon>Bacteria</taxon>
        <taxon>Bacillati</taxon>
        <taxon>Cyanobacteriota</taxon>
        <taxon>Cyanophyceae</taxon>
        <taxon>Synechococcales</taxon>
        <taxon>Prochlorococcaceae</taxon>
        <taxon>Prochlorococcus</taxon>
    </lineage>
</organism>
<feature type="chain" id="PRO_1000003562" description="Small ribosomal subunit protein bS18">
    <location>
        <begin position="1"/>
        <end position="73"/>
    </location>
</feature>
<gene>
    <name evidence="1" type="primary">rpsR</name>
    <name evidence="1" type="synonym">rps18</name>
    <name type="ordered locus">A9601_09931</name>
</gene>
<name>RS18_PROMS</name>
<dbReference type="EMBL" id="CP000551">
    <property type="protein sequence ID" value="ABM70277.1"/>
    <property type="molecule type" value="Genomic_DNA"/>
</dbReference>
<dbReference type="RefSeq" id="WP_002806014.1">
    <property type="nucleotide sequence ID" value="NC_008816.1"/>
</dbReference>
<dbReference type="SMR" id="A2BR66"/>
<dbReference type="STRING" id="146891.A9601_09931"/>
<dbReference type="GeneID" id="60201040"/>
<dbReference type="KEGG" id="pmb:A9601_09931"/>
<dbReference type="eggNOG" id="COG0238">
    <property type="taxonomic scope" value="Bacteria"/>
</dbReference>
<dbReference type="HOGENOM" id="CLU_148710_2_3_3"/>
<dbReference type="OrthoDB" id="9812008at2"/>
<dbReference type="Proteomes" id="UP000002590">
    <property type="component" value="Chromosome"/>
</dbReference>
<dbReference type="GO" id="GO:0022627">
    <property type="term" value="C:cytosolic small ribosomal subunit"/>
    <property type="evidence" value="ECO:0007669"/>
    <property type="project" value="TreeGrafter"/>
</dbReference>
<dbReference type="GO" id="GO:0070181">
    <property type="term" value="F:small ribosomal subunit rRNA binding"/>
    <property type="evidence" value="ECO:0007669"/>
    <property type="project" value="TreeGrafter"/>
</dbReference>
<dbReference type="GO" id="GO:0003735">
    <property type="term" value="F:structural constituent of ribosome"/>
    <property type="evidence" value="ECO:0007669"/>
    <property type="project" value="InterPro"/>
</dbReference>
<dbReference type="GO" id="GO:0006412">
    <property type="term" value="P:translation"/>
    <property type="evidence" value="ECO:0007669"/>
    <property type="project" value="UniProtKB-UniRule"/>
</dbReference>
<dbReference type="FunFam" id="4.10.640.10:FF:000002">
    <property type="entry name" value="30S ribosomal protein S18, chloroplastic"/>
    <property type="match status" value="1"/>
</dbReference>
<dbReference type="Gene3D" id="4.10.640.10">
    <property type="entry name" value="Ribosomal protein S18"/>
    <property type="match status" value="1"/>
</dbReference>
<dbReference type="HAMAP" id="MF_00270">
    <property type="entry name" value="Ribosomal_bS18"/>
    <property type="match status" value="1"/>
</dbReference>
<dbReference type="InterPro" id="IPR001648">
    <property type="entry name" value="Ribosomal_bS18"/>
</dbReference>
<dbReference type="InterPro" id="IPR018275">
    <property type="entry name" value="Ribosomal_bS18_CS"/>
</dbReference>
<dbReference type="InterPro" id="IPR036870">
    <property type="entry name" value="Ribosomal_bS18_sf"/>
</dbReference>
<dbReference type="NCBIfam" id="TIGR00165">
    <property type="entry name" value="S18"/>
    <property type="match status" value="1"/>
</dbReference>
<dbReference type="PANTHER" id="PTHR13479">
    <property type="entry name" value="30S RIBOSOMAL PROTEIN S18"/>
    <property type="match status" value="1"/>
</dbReference>
<dbReference type="PANTHER" id="PTHR13479:SF40">
    <property type="entry name" value="SMALL RIBOSOMAL SUBUNIT PROTEIN BS18M"/>
    <property type="match status" value="1"/>
</dbReference>
<dbReference type="Pfam" id="PF01084">
    <property type="entry name" value="Ribosomal_S18"/>
    <property type="match status" value="1"/>
</dbReference>
<dbReference type="PRINTS" id="PR00974">
    <property type="entry name" value="RIBOSOMALS18"/>
</dbReference>
<dbReference type="SUPFAM" id="SSF46911">
    <property type="entry name" value="Ribosomal protein S18"/>
    <property type="match status" value="1"/>
</dbReference>
<dbReference type="PROSITE" id="PS00057">
    <property type="entry name" value="RIBOSOMAL_S18"/>
    <property type="match status" value="1"/>
</dbReference>
<sequence>MPNSIFKKQLSPIKPGDPIDYKDVELLKKFITERGKILPRRMTGLTSKQQRDLTLAVKRARIVALLPFVNPEG</sequence>